<proteinExistence type="evidence at transcript level"/>
<name>SCP22_ARATH</name>
<accession>Q1PF08</accession>
<accession>O82228</accession>
<accession>Q1PF09</accession>
<dbReference type="EC" id="3.4.16.-"/>
<dbReference type="EMBL" id="AC005170">
    <property type="protein sequence ID" value="AAC63668.1"/>
    <property type="status" value="ALT_SEQ"/>
    <property type="molecule type" value="Genomic_DNA"/>
</dbReference>
<dbReference type="EMBL" id="CP002685">
    <property type="protein sequence ID" value="AEC07515.1"/>
    <property type="molecule type" value="Genomic_DNA"/>
</dbReference>
<dbReference type="EMBL" id="CP002685">
    <property type="protein sequence ID" value="AEC07516.1"/>
    <property type="molecule type" value="Genomic_DNA"/>
</dbReference>
<dbReference type="EMBL" id="DQ446557">
    <property type="protein sequence ID" value="ABE65855.1"/>
    <property type="molecule type" value="mRNA"/>
</dbReference>
<dbReference type="EMBL" id="DQ446558">
    <property type="protein sequence ID" value="ABE65856.1"/>
    <property type="molecule type" value="mRNA"/>
</dbReference>
<dbReference type="PIR" id="D84631">
    <property type="entry name" value="D84631"/>
</dbReference>
<dbReference type="RefSeq" id="NP_001077950.1">
    <molecule id="Q1PF08-2"/>
    <property type="nucleotide sequence ID" value="NM_001084481.1"/>
</dbReference>
<dbReference type="RefSeq" id="NP_179978.2">
    <molecule id="Q1PF08-1"/>
    <property type="nucleotide sequence ID" value="NM_127962.3"/>
</dbReference>
<dbReference type="SMR" id="Q1PF08"/>
<dbReference type="STRING" id="3702.Q1PF08"/>
<dbReference type="ESTHER" id="arath-SCP22">
    <property type="family name" value="Carboxypeptidase_S10"/>
</dbReference>
<dbReference type="MEROPS" id="S10.A35"/>
<dbReference type="GlyCosmos" id="Q1PF08">
    <property type="glycosylation" value="5 sites, No reported glycans"/>
</dbReference>
<dbReference type="GlyGen" id="Q1PF08">
    <property type="glycosylation" value="5 sites"/>
</dbReference>
<dbReference type="PaxDb" id="3702-AT2G24000.1"/>
<dbReference type="ProteomicsDB" id="226629">
    <molecule id="Q1PF08-1"/>
</dbReference>
<dbReference type="EnsemblPlants" id="AT2G24000.1">
    <molecule id="Q1PF08-1"/>
    <property type="protein sequence ID" value="AT2G24000.1"/>
    <property type="gene ID" value="AT2G24000"/>
</dbReference>
<dbReference type="EnsemblPlants" id="AT2G24000.2">
    <molecule id="Q1PF08-2"/>
    <property type="protein sequence ID" value="AT2G24000.2"/>
    <property type="gene ID" value="AT2G24000"/>
</dbReference>
<dbReference type="GeneID" id="816934"/>
<dbReference type="Gramene" id="AT2G24000.1">
    <molecule id="Q1PF08-1"/>
    <property type="protein sequence ID" value="AT2G24000.1"/>
    <property type="gene ID" value="AT2G24000"/>
</dbReference>
<dbReference type="Gramene" id="AT2G24000.2">
    <molecule id="Q1PF08-2"/>
    <property type="protein sequence ID" value="AT2G24000.2"/>
    <property type="gene ID" value="AT2G24000"/>
</dbReference>
<dbReference type="KEGG" id="ath:AT2G24000"/>
<dbReference type="Araport" id="AT2G24000"/>
<dbReference type="TAIR" id="AT2G24000">
    <property type="gene designation" value="SCPL22"/>
</dbReference>
<dbReference type="eggNOG" id="KOG1282">
    <property type="taxonomic scope" value="Eukaryota"/>
</dbReference>
<dbReference type="HOGENOM" id="CLU_008523_13_0_1"/>
<dbReference type="InParanoid" id="Q1PF08"/>
<dbReference type="OMA" id="THIPYNW"/>
<dbReference type="PhylomeDB" id="Q1PF08"/>
<dbReference type="PRO" id="PR:Q1PF08"/>
<dbReference type="Proteomes" id="UP000006548">
    <property type="component" value="Chromosome 2"/>
</dbReference>
<dbReference type="ExpressionAtlas" id="Q1PF08">
    <property type="expression patterns" value="baseline and differential"/>
</dbReference>
<dbReference type="GO" id="GO:0005576">
    <property type="term" value="C:extracellular region"/>
    <property type="evidence" value="ECO:0007669"/>
    <property type="project" value="UniProtKB-SubCell"/>
</dbReference>
<dbReference type="GO" id="GO:0004185">
    <property type="term" value="F:serine-type carboxypeptidase activity"/>
    <property type="evidence" value="ECO:0007669"/>
    <property type="project" value="InterPro"/>
</dbReference>
<dbReference type="GO" id="GO:0006508">
    <property type="term" value="P:proteolysis"/>
    <property type="evidence" value="ECO:0007669"/>
    <property type="project" value="UniProtKB-KW"/>
</dbReference>
<dbReference type="FunFam" id="3.40.50.11320:FF:000002">
    <property type="entry name" value="Carboxypeptidase"/>
    <property type="match status" value="1"/>
</dbReference>
<dbReference type="FunFam" id="3.40.50.1820:FF:000013">
    <property type="entry name" value="Carboxypeptidase"/>
    <property type="match status" value="1"/>
</dbReference>
<dbReference type="Gene3D" id="3.40.50.11320">
    <property type="match status" value="1"/>
</dbReference>
<dbReference type="Gene3D" id="6.10.250.940">
    <property type="match status" value="1"/>
</dbReference>
<dbReference type="Gene3D" id="3.40.50.1820">
    <property type="entry name" value="alpha/beta hydrolase"/>
    <property type="match status" value="1"/>
</dbReference>
<dbReference type="InterPro" id="IPR029058">
    <property type="entry name" value="AB_hydrolase_fold"/>
</dbReference>
<dbReference type="InterPro" id="IPR001563">
    <property type="entry name" value="Peptidase_S10"/>
</dbReference>
<dbReference type="InterPro" id="IPR033124">
    <property type="entry name" value="Ser_caboxypep_his_AS"/>
</dbReference>
<dbReference type="InterPro" id="IPR018202">
    <property type="entry name" value="Ser_caboxypep_ser_AS"/>
</dbReference>
<dbReference type="PANTHER" id="PTHR11802:SF298">
    <property type="entry name" value="SERINE CARBOXYPEPTIDASE-LIKE 22-RELATED"/>
    <property type="match status" value="1"/>
</dbReference>
<dbReference type="PANTHER" id="PTHR11802">
    <property type="entry name" value="SERINE PROTEASE FAMILY S10 SERINE CARBOXYPEPTIDASE"/>
    <property type="match status" value="1"/>
</dbReference>
<dbReference type="Pfam" id="PF00450">
    <property type="entry name" value="Peptidase_S10"/>
    <property type="match status" value="1"/>
</dbReference>
<dbReference type="PRINTS" id="PR00724">
    <property type="entry name" value="CRBOXYPTASEC"/>
</dbReference>
<dbReference type="SUPFAM" id="SSF53474">
    <property type="entry name" value="alpha/beta-Hydrolases"/>
    <property type="match status" value="1"/>
</dbReference>
<dbReference type="PROSITE" id="PS00560">
    <property type="entry name" value="CARBOXYPEPT_SER_HIS"/>
    <property type="match status" value="1"/>
</dbReference>
<dbReference type="PROSITE" id="PS00131">
    <property type="entry name" value="CARBOXYPEPT_SER_SER"/>
    <property type="match status" value="1"/>
</dbReference>
<protein>
    <recommendedName>
        <fullName>Serine carboxypeptidase-like 22</fullName>
        <ecNumber>3.4.16.-</ecNumber>
    </recommendedName>
</protein>
<gene>
    <name type="primary">SCPL22</name>
    <name type="ordered locus">At2g24000</name>
    <name type="ORF">T29E15.20</name>
</gene>
<reference key="1">
    <citation type="journal article" date="1999" name="Nature">
        <title>Sequence and analysis of chromosome 2 of the plant Arabidopsis thaliana.</title>
        <authorList>
            <person name="Lin X."/>
            <person name="Kaul S."/>
            <person name="Rounsley S.D."/>
            <person name="Shea T.P."/>
            <person name="Benito M.-I."/>
            <person name="Town C.D."/>
            <person name="Fujii C.Y."/>
            <person name="Mason T.M."/>
            <person name="Bowman C.L."/>
            <person name="Barnstead M.E."/>
            <person name="Feldblyum T.V."/>
            <person name="Buell C.R."/>
            <person name="Ketchum K.A."/>
            <person name="Lee J.J."/>
            <person name="Ronning C.M."/>
            <person name="Koo H.L."/>
            <person name="Moffat K.S."/>
            <person name="Cronin L.A."/>
            <person name="Shen M."/>
            <person name="Pai G."/>
            <person name="Van Aken S."/>
            <person name="Umayam L."/>
            <person name="Tallon L.J."/>
            <person name="Gill J.E."/>
            <person name="Adams M.D."/>
            <person name="Carrera A.J."/>
            <person name="Creasy T.H."/>
            <person name="Goodman H.M."/>
            <person name="Somerville C.R."/>
            <person name="Copenhaver G.P."/>
            <person name="Preuss D."/>
            <person name="Nierman W.C."/>
            <person name="White O."/>
            <person name="Eisen J.A."/>
            <person name="Salzberg S.L."/>
            <person name="Fraser C.M."/>
            <person name="Venter J.C."/>
        </authorList>
    </citation>
    <scope>NUCLEOTIDE SEQUENCE [LARGE SCALE GENOMIC DNA]</scope>
    <source>
        <strain>cv. Columbia</strain>
    </source>
</reference>
<reference key="2">
    <citation type="journal article" date="2017" name="Plant J.">
        <title>Araport11: a complete reannotation of the Arabidopsis thaliana reference genome.</title>
        <authorList>
            <person name="Cheng C.Y."/>
            <person name="Krishnakumar V."/>
            <person name="Chan A.P."/>
            <person name="Thibaud-Nissen F."/>
            <person name="Schobel S."/>
            <person name="Town C.D."/>
        </authorList>
    </citation>
    <scope>GENOME REANNOTATION</scope>
    <source>
        <strain>cv. Columbia</strain>
    </source>
</reference>
<reference key="3">
    <citation type="journal article" date="2006" name="Plant Biotechnol. J.">
        <title>Simultaneous high-throughput recombinational cloning of open reading frames in closed and open configurations.</title>
        <authorList>
            <person name="Underwood B.A."/>
            <person name="Vanderhaeghen R."/>
            <person name="Whitford R."/>
            <person name="Town C.D."/>
            <person name="Hilson P."/>
        </authorList>
    </citation>
    <scope>NUCLEOTIDE SEQUENCE [LARGE SCALE MRNA] (ISOFORMS 1 AND 2)</scope>
    <source>
        <strain>cv. Columbia</strain>
    </source>
</reference>
<reference key="4">
    <citation type="journal article" date="2005" name="Plant Physiol.">
        <title>An expression and bioinformatics analysis of the Arabidopsis serine carboxypeptidase-like gene family.</title>
        <authorList>
            <person name="Fraser C.M."/>
            <person name="Rider L.W."/>
            <person name="Chapple C."/>
        </authorList>
    </citation>
    <scope>GENE FAMILY</scope>
    <scope>TISSUE SPECIFICITY</scope>
    <scope>NOMENCLATURE</scope>
</reference>
<organism>
    <name type="scientific">Arabidopsis thaliana</name>
    <name type="common">Mouse-ear cress</name>
    <dbReference type="NCBI Taxonomy" id="3702"/>
    <lineage>
        <taxon>Eukaryota</taxon>
        <taxon>Viridiplantae</taxon>
        <taxon>Streptophyta</taxon>
        <taxon>Embryophyta</taxon>
        <taxon>Tracheophyta</taxon>
        <taxon>Spermatophyta</taxon>
        <taxon>Magnoliopsida</taxon>
        <taxon>eudicotyledons</taxon>
        <taxon>Gunneridae</taxon>
        <taxon>Pentapetalae</taxon>
        <taxon>rosids</taxon>
        <taxon>malvids</taxon>
        <taxon>Brassicales</taxon>
        <taxon>Brassicaceae</taxon>
        <taxon>Camelineae</taxon>
        <taxon>Arabidopsis</taxon>
    </lineage>
</organism>
<feature type="signal peptide" evidence="2">
    <location>
        <begin position="1"/>
        <end position="22"/>
    </location>
</feature>
<feature type="chain" id="PRO_0000274638" description="Serine carboxypeptidase-like 22">
    <location>
        <begin position="23"/>
        <end position="464"/>
    </location>
</feature>
<feature type="active site" evidence="1">
    <location>
        <position position="179"/>
    </location>
</feature>
<feature type="active site" evidence="1">
    <location>
        <position position="385"/>
    </location>
</feature>
<feature type="active site" evidence="1">
    <location>
        <position position="437"/>
    </location>
</feature>
<feature type="glycosylation site" description="N-linked (GlcNAc...) asparagine" evidence="2">
    <location>
        <position position="52"/>
    </location>
</feature>
<feature type="glycosylation site" description="N-linked (GlcNAc...) asparagine" evidence="2">
    <location>
        <position position="113"/>
    </location>
</feature>
<feature type="glycosylation site" description="N-linked (GlcNAc...) asparagine" evidence="2">
    <location>
        <position position="137"/>
    </location>
</feature>
<feature type="glycosylation site" description="N-linked (GlcNAc...) asparagine" evidence="2">
    <location>
        <position position="290"/>
    </location>
</feature>
<feature type="glycosylation site" description="N-linked (GlcNAc...) asparagine" evidence="2">
    <location>
        <position position="335"/>
    </location>
</feature>
<feature type="disulfide bond" evidence="1">
    <location>
        <begin position="86"/>
        <end position="346"/>
    </location>
</feature>
<feature type="disulfide bond" evidence="1">
    <location>
        <begin position="247"/>
        <end position="258"/>
    </location>
</feature>
<feature type="disulfide bond" evidence="1">
    <location>
        <begin position="282"/>
        <end position="314"/>
    </location>
</feature>
<feature type="splice variant" id="VSP_022849" description="In isoform 2." evidence="4">
    <location>
        <begin position="119"/>
        <end position="181"/>
    </location>
</feature>
<sequence>MARTHLLFLLFVLLSLATSSTSTKEQEEDRIKALPGQPKVGFSQFSGYVTVNESHGRSLFYWLTESSSHSPHTKPLLLWLNGGPGCSSIAYGASEEIGPFRISKTGCNLYLNNFSWNTEANLLFLESPVGVGFSYTNTSSDFEESGDERTAQENLIFLISWMSRFPQYRYRDFYIVGESYAGHYVPQLAQKIHEYNNAYKNPVINLKGFMVGNPEMDKNNDRLGTITYWWSHAMISDASYNRILKNCDFTADRFSKECDSAIYVAAADFGDIDQYSIYTPKCVPPQDQTNQTKFEQMMQMHTTKRFLEDQYDPCTENYAEIYYNRPEVQRAMHANHTAIPYKWTACSDSVFNNWNWRDSDNSMLPIYKELIAAGLRIWVYSGDTDSVIPVTATRYSLGKLNLRVKTRWYPWYSGNQVGGRTEVYEGLTFVTVRGAGHEVPFFQPQSALILLRSFLAGNELSRSY</sequence>
<evidence type="ECO:0000250" key="1"/>
<evidence type="ECO:0000255" key="2"/>
<evidence type="ECO:0000269" key="3">
    <source>
    </source>
</evidence>
<evidence type="ECO:0000303" key="4">
    <source>
    </source>
</evidence>
<evidence type="ECO:0000305" key="5"/>
<keyword id="KW-0025">Alternative splicing</keyword>
<keyword id="KW-0121">Carboxypeptidase</keyword>
<keyword id="KW-1015">Disulfide bond</keyword>
<keyword id="KW-0325">Glycoprotein</keyword>
<keyword id="KW-0378">Hydrolase</keyword>
<keyword id="KW-0645">Protease</keyword>
<keyword id="KW-1185">Reference proteome</keyword>
<keyword id="KW-0964">Secreted</keyword>
<keyword id="KW-0732">Signal</keyword>
<comment type="function">
    <text evidence="1">Probable carboxypeptidase.</text>
</comment>
<comment type="subcellular location">
    <subcellularLocation>
        <location evidence="5">Secreted</location>
    </subcellularLocation>
</comment>
<comment type="alternative products">
    <event type="alternative splicing"/>
    <isoform>
        <id>Q1PF08-1</id>
        <name>1</name>
        <sequence type="displayed"/>
    </isoform>
    <isoform>
        <id>Q1PF08-2</id>
        <name>2</name>
        <sequence type="described" ref="VSP_022849"/>
    </isoform>
</comment>
<comment type="tissue specificity">
    <text evidence="3">Expression not detected.</text>
</comment>
<comment type="similarity">
    <text evidence="5">Belongs to the peptidase S10 family.</text>
</comment>
<comment type="sequence caution" evidence="5">
    <conflict type="erroneous gene model prediction">
        <sequence resource="EMBL-CDS" id="AAC63668"/>
    </conflict>
</comment>